<gene>
    <name evidence="1" type="primary">nadE</name>
    <name type="ordered locus">NWMN_1850</name>
</gene>
<comment type="function">
    <text evidence="1">Catalyzes the ATP-dependent amidation of deamido-NAD to form NAD. Uses ammonia as a nitrogen source.</text>
</comment>
<comment type="catalytic activity">
    <reaction evidence="1">
        <text>deamido-NAD(+) + NH4(+) + ATP = AMP + diphosphate + NAD(+) + H(+)</text>
        <dbReference type="Rhea" id="RHEA:21188"/>
        <dbReference type="ChEBI" id="CHEBI:15378"/>
        <dbReference type="ChEBI" id="CHEBI:28938"/>
        <dbReference type="ChEBI" id="CHEBI:30616"/>
        <dbReference type="ChEBI" id="CHEBI:33019"/>
        <dbReference type="ChEBI" id="CHEBI:57540"/>
        <dbReference type="ChEBI" id="CHEBI:58437"/>
        <dbReference type="ChEBI" id="CHEBI:456215"/>
        <dbReference type="EC" id="6.3.1.5"/>
    </reaction>
</comment>
<comment type="pathway">
    <text evidence="1">Cofactor biosynthesis; NAD(+) biosynthesis; NAD(+) from deamido-NAD(+) (ammonia route): step 1/1.</text>
</comment>
<comment type="subunit">
    <text evidence="1">Homodimer.</text>
</comment>
<comment type="similarity">
    <text evidence="1">Belongs to the NAD synthetase family.</text>
</comment>
<feature type="chain" id="PRO_1000077618" description="NH(3)-dependent NAD(+) synthetase">
    <location>
        <begin position="1"/>
        <end position="273"/>
    </location>
</feature>
<feature type="binding site" evidence="1">
    <location>
        <begin position="47"/>
        <end position="54"/>
    </location>
    <ligand>
        <name>ATP</name>
        <dbReference type="ChEBI" id="CHEBI:30616"/>
    </ligand>
</feature>
<feature type="binding site" evidence="1">
    <location>
        <position position="53"/>
    </location>
    <ligand>
        <name>Mg(2+)</name>
        <dbReference type="ChEBI" id="CHEBI:18420"/>
    </ligand>
</feature>
<feature type="binding site" evidence="1">
    <location>
        <position position="139"/>
    </location>
    <ligand>
        <name>deamido-NAD(+)</name>
        <dbReference type="ChEBI" id="CHEBI:58437"/>
    </ligand>
</feature>
<feature type="binding site" evidence="1">
    <location>
        <position position="159"/>
    </location>
    <ligand>
        <name>ATP</name>
        <dbReference type="ChEBI" id="CHEBI:30616"/>
    </ligand>
</feature>
<feature type="binding site" evidence="1">
    <location>
        <position position="164"/>
    </location>
    <ligand>
        <name>Mg(2+)</name>
        <dbReference type="ChEBI" id="CHEBI:18420"/>
    </ligand>
</feature>
<feature type="binding site" evidence="1">
    <location>
        <position position="172"/>
    </location>
    <ligand>
        <name>deamido-NAD(+)</name>
        <dbReference type="ChEBI" id="CHEBI:58437"/>
    </ligand>
</feature>
<feature type="binding site" evidence="1">
    <location>
        <position position="179"/>
    </location>
    <ligand>
        <name>deamido-NAD(+)</name>
        <dbReference type="ChEBI" id="CHEBI:58437"/>
    </ligand>
</feature>
<feature type="binding site" evidence="1">
    <location>
        <position position="188"/>
    </location>
    <ligand>
        <name>ATP</name>
        <dbReference type="ChEBI" id="CHEBI:30616"/>
    </ligand>
</feature>
<feature type="binding site" evidence="1">
    <location>
        <position position="210"/>
    </location>
    <ligand>
        <name>ATP</name>
        <dbReference type="ChEBI" id="CHEBI:30616"/>
    </ligand>
</feature>
<feature type="binding site" evidence="1">
    <location>
        <begin position="259"/>
        <end position="260"/>
    </location>
    <ligand>
        <name>deamido-NAD(+)</name>
        <dbReference type="ChEBI" id="CHEBI:58437"/>
    </ligand>
</feature>
<keyword id="KW-0067">ATP-binding</keyword>
<keyword id="KW-0436">Ligase</keyword>
<keyword id="KW-0460">Magnesium</keyword>
<keyword id="KW-0479">Metal-binding</keyword>
<keyword id="KW-0520">NAD</keyword>
<keyword id="KW-0547">Nucleotide-binding</keyword>
<organism>
    <name type="scientific">Staphylococcus aureus (strain Newman)</name>
    <dbReference type="NCBI Taxonomy" id="426430"/>
    <lineage>
        <taxon>Bacteria</taxon>
        <taxon>Bacillati</taxon>
        <taxon>Bacillota</taxon>
        <taxon>Bacilli</taxon>
        <taxon>Bacillales</taxon>
        <taxon>Staphylococcaceae</taxon>
        <taxon>Staphylococcus</taxon>
    </lineage>
</organism>
<proteinExistence type="inferred from homology"/>
<accession>A6QIE0</accession>
<evidence type="ECO:0000255" key="1">
    <source>
        <dbReference type="HAMAP-Rule" id="MF_00193"/>
    </source>
</evidence>
<protein>
    <recommendedName>
        <fullName evidence="1">NH(3)-dependent NAD(+) synthetase</fullName>
        <ecNumber evidence="1">6.3.1.5</ecNumber>
    </recommendedName>
</protein>
<dbReference type="EC" id="6.3.1.5" evidence="1"/>
<dbReference type="EMBL" id="AP009351">
    <property type="protein sequence ID" value="BAF68122.1"/>
    <property type="molecule type" value="Genomic_DNA"/>
</dbReference>
<dbReference type="RefSeq" id="WP_000040873.1">
    <property type="nucleotide sequence ID" value="NZ_JBBIAE010000010.1"/>
</dbReference>
<dbReference type="SMR" id="A6QIE0"/>
<dbReference type="KEGG" id="sae:NWMN_1850"/>
<dbReference type="HOGENOM" id="CLU_059327_3_0_9"/>
<dbReference type="UniPathway" id="UPA00253">
    <property type="reaction ID" value="UER00333"/>
</dbReference>
<dbReference type="Proteomes" id="UP000006386">
    <property type="component" value="Chromosome"/>
</dbReference>
<dbReference type="GO" id="GO:0005737">
    <property type="term" value="C:cytoplasm"/>
    <property type="evidence" value="ECO:0007669"/>
    <property type="project" value="InterPro"/>
</dbReference>
<dbReference type="GO" id="GO:0005524">
    <property type="term" value="F:ATP binding"/>
    <property type="evidence" value="ECO:0007669"/>
    <property type="project" value="UniProtKB-UniRule"/>
</dbReference>
<dbReference type="GO" id="GO:0004359">
    <property type="term" value="F:glutaminase activity"/>
    <property type="evidence" value="ECO:0007669"/>
    <property type="project" value="InterPro"/>
</dbReference>
<dbReference type="GO" id="GO:0046872">
    <property type="term" value="F:metal ion binding"/>
    <property type="evidence" value="ECO:0007669"/>
    <property type="project" value="UniProtKB-KW"/>
</dbReference>
<dbReference type="GO" id="GO:0003952">
    <property type="term" value="F:NAD+ synthase (glutamine-hydrolyzing) activity"/>
    <property type="evidence" value="ECO:0007669"/>
    <property type="project" value="InterPro"/>
</dbReference>
<dbReference type="GO" id="GO:0008795">
    <property type="term" value="F:NAD+ synthase activity"/>
    <property type="evidence" value="ECO:0007669"/>
    <property type="project" value="UniProtKB-UniRule"/>
</dbReference>
<dbReference type="GO" id="GO:0009435">
    <property type="term" value="P:NAD biosynthetic process"/>
    <property type="evidence" value="ECO:0007669"/>
    <property type="project" value="UniProtKB-UniRule"/>
</dbReference>
<dbReference type="CDD" id="cd00553">
    <property type="entry name" value="NAD_synthase"/>
    <property type="match status" value="1"/>
</dbReference>
<dbReference type="FunFam" id="3.40.50.620:FF:000015">
    <property type="entry name" value="NH(3)-dependent NAD(+) synthetase"/>
    <property type="match status" value="1"/>
</dbReference>
<dbReference type="Gene3D" id="3.40.50.620">
    <property type="entry name" value="HUPs"/>
    <property type="match status" value="1"/>
</dbReference>
<dbReference type="HAMAP" id="MF_00193">
    <property type="entry name" value="NadE_ammonia_dep"/>
    <property type="match status" value="1"/>
</dbReference>
<dbReference type="InterPro" id="IPR022310">
    <property type="entry name" value="NAD/GMP_synthase"/>
</dbReference>
<dbReference type="InterPro" id="IPR003694">
    <property type="entry name" value="NAD_synthase"/>
</dbReference>
<dbReference type="InterPro" id="IPR022926">
    <property type="entry name" value="NH(3)-dep_NAD(+)_synth"/>
</dbReference>
<dbReference type="InterPro" id="IPR014729">
    <property type="entry name" value="Rossmann-like_a/b/a_fold"/>
</dbReference>
<dbReference type="NCBIfam" id="TIGR00552">
    <property type="entry name" value="nadE"/>
    <property type="match status" value="1"/>
</dbReference>
<dbReference type="NCBIfam" id="NF001979">
    <property type="entry name" value="PRK00768.1"/>
    <property type="match status" value="1"/>
</dbReference>
<dbReference type="PANTHER" id="PTHR23090">
    <property type="entry name" value="NH 3 /GLUTAMINE-DEPENDENT NAD + SYNTHETASE"/>
    <property type="match status" value="1"/>
</dbReference>
<dbReference type="PANTHER" id="PTHR23090:SF7">
    <property type="entry name" value="NH(3)-DEPENDENT NAD(+) SYNTHETASE"/>
    <property type="match status" value="1"/>
</dbReference>
<dbReference type="Pfam" id="PF02540">
    <property type="entry name" value="NAD_synthase"/>
    <property type="match status" value="1"/>
</dbReference>
<dbReference type="SUPFAM" id="SSF52402">
    <property type="entry name" value="Adenine nucleotide alpha hydrolases-like"/>
    <property type="match status" value="1"/>
</dbReference>
<name>NADE_STAAE</name>
<reference key="1">
    <citation type="journal article" date="2008" name="J. Bacteriol.">
        <title>Genome sequence of Staphylococcus aureus strain Newman and comparative analysis of staphylococcal genomes: polymorphism and evolution of two major pathogenicity islands.</title>
        <authorList>
            <person name="Baba T."/>
            <person name="Bae T."/>
            <person name="Schneewind O."/>
            <person name="Takeuchi F."/>
            <person name="Hiramatsu K."/>
        </authorList>
    </citation>
    <scope>NUCLEOTIDE SEQUENCE [LARGE SCALE GENOMIC DNA]</scope>
    <source>
        <strain>Newman</strain>
    </source>
</reference>
<sequence length="273" mass="30697">MSKLQDVIVQEMKVKKRIDSAEEIMELKQFIKNYVQSHSFIKSLVLGISGGQDSTLVGKLVQMSVNELREEGIDCTFIAVKLPYGVQKDADEVEQALRFIEPDEIVTVNIKPAVDQSVQSLKEAGIVLTDFQKGNEKARERMKVQFSIASNRQGIVVGTDHSAENITGFYTKYGDGAADIAPIFGLNKRQGRQLLAYLGAPKELYEKTPTADLEDDKPQLPDEDALGVTYEAIDNYLEGKPVTPEEQKVIENHYIRNAHKRELAYTRYTWPKS</sequence>